<gene>
    <name evidence="1" type="primary">lipB</name>
    <name type="ordered locus">Smed_1026</name>
</gene>
<dbReference type="EC" id="2.3.1.181" evidence="1"/>
<dbReference type="EMBL" id="CP000738">
    <property type="protein sequence ID" value="ABR59879.1"/>
    <property type="molecule type" value="Genomic_DNA"/>
</dbReference>
<dbReference type="RefSeq" id="WP_011975203.1">
    <property type="nucleotide sequence ID" value="NC_009636.1"/>
</dbReference>
<dbReference type="RefSeq" id="YP_001326714.1">
    <property type="nucleotide sequence ID" value="NC_009636.1"/>
</dbReference>
<dbReference type="SMR" id="A6U899"/>
<dbReference type="STRING" id="366394.Smed_1026"/>
<dbReference type="GeneID" id="61612191"/>
<dbReference type="KEGG" id="smd:Smed_1026"/>
<dbReference type="PATRIC" id="fig|366394.8.peg.4147"/>
<dbReference type="eggNOG" id="COG0321">
    <property type="taxonomic scope" value="Bacteria"/>
</dbReference>
<dbReference type="HOGENOM" id="CLU_035168_3_0_5"/>
<dbReference type="OrthoDB" id="9787061at2"/>
<dbReference type="UniPathway" id="UPA00538">
    <property type="reaction ID" value="UER00592"/>
</dbReference>
<dbReference type="Proteomes" id="UP000001108">
    <property type="component" value="Chromosome"/>
</dbReference>
<dbReference type="GO" id="GO:0005737">
    <property type="term" value="C:cytoplasm"/>
    <property type="evidence" value="ECO:0007669"/>
    <property type="project" value="UniProtKB-SubCell"/>
</dbReference>
<dbReference type="GO" id="GO:0033819">
    <property type="term" value="F:lipoyl(octanoyl) transferase activity"/>
    <property type="evidence" value="ECO:0007669"/>
    <property type="project" value="UniProtKB-EC"/>
</dbReference>
<dbReference type="GO" id="GO:0036211">
    <property type="term" value="P:protein modification process"/>
    <property type="evidence" value="ECO:0007669"/>
    <property type="project" value="InterPro"/>
</dbReference>
<dbReference type="CDD" id="cd16444">
    <property type="entry name" value="LipB"/>
    <property type="match status" value="1"/>
</dbReference>
<dbReference type="Gene3D" id="3.30.930.10">
    <property type="entry name" value="Bira Bifunctional Protein, Domain 2"/>
    <property type="match status" value="1"/>
</dbReference>
<dbReference type="HAMAP" id="MF_00013">
    <property type="entry name" value="LipB"/>
    <property type="match status" value="1"/>
</dbReference>
<dbReference type="InterPro" id="IPR045864">
    <property type="entry name" value="aa-tRNA-synth_II/BPL/LPL"/>
</dbReference>
<dbReference type="InterPro" id="IPR004143">
    <property type="entry name" value="BPL_LPL_catalytic"/>
</dbReference>
<dbReference type="InterPro" id="IPR000544">
    <property type="entry name" value="Octanoyltransferase"/>
</dbReference>
<dbReference type="InterPro" id="IPR020605">
    <property type="entry name" value="Octanoyltransferase_CS"/>
</dbReference>
<dbReference type="NCBIfam" id="TIGR00214">
    <property type="entry name" value="lipB"/>
    <property type="match status" value="1"/>
</dbReference>
<dbReference type="NCBIfam" id="NF010921">
    <property type="entry name" value="PRK14341.1"/>
    <property type="match status" value="1"/>
</dbReference>
<dbReference type="NCBIfam" id="NF010925">
    <property type="entry name" value="PRK14345.1"/>
    <property type="match status" value="1"/>
</dbReference>
<dbReference type="PANTHER" id="PTHR10993:SF7">
    <property type="entry name" value="LIPOYLTRANSFERASE 2, MITOCHONDRIAL-RELATED"/>
    <property type="match status" value="1"/>
</dbReference>
<dbReference type="PANTHER" id="PTHR10993">
    <property type="entry name" value="OCTANOYLTRANSFERASE"/>
    <property type="match status" value="1"/>
</dbReference>
<dbReference type="Pfam" id="PF21948">
    <property type="entry name" value="LplA-B_cat"/>
    <property type="match status" value="1"/>
</dbReference>
<dbReference type="PIRSF" id="PIRSF016262">
    <property type="entry name" value="LPLase"/>
    <property type="match status" value="1"/>
</dbReference>
<dbReference type="SUPFAM" id="SSF55681">
    <property type="entry name" value="Class II aaRS and biotin synthetases"/>
    <property type="match status" value="1"/>
</dbReference>
<dbReference type="PROSITE" id="PS51733">
    <property type="entry name" value="BPL_LPL_CATALYTIC"/>
    <property type="match status" value="1"/>
</dbReference>
<dbReference type="PROSITE" id="PS01313">
    <property type="entry name" value="LIPB"/>
    <property type="match status" value="1"/>
</dbReference>
<reference key="1">
    <citation type="submission" date="2007-06" db="EMBL/GenBank/DDBJ databases">
        <title>Complete sequence of Sinorhizobium medicae WSM419 chromosome.</title>
        <authorList>
            <consortium name="US DOE Joint Genome Institute"/>
            <person name="Copeland A."/>
            <person name="Lucas S."/>
            <person name="Lapidus A."/>
            <person name="Barry K."/>
            <person name="Glavina del Rio T."/>
            <person name="Dalin E."/>
            <person name="Tice H."/>
            <person name="Pitluck S."/>
            <person name="Chain P."/>
            <person name="Malfatti S."/>
            <person name="Shin M."/>
            <person name="Vergez L."/>
            <person name="Schmutz J."/>
            <person name="Larimer F."/>
            <person name="Land M."/>
            <person name="Hauser L."/>
            <person name="Kyrpides N."/>
            <person name="Mikhailova N."/>
            <person name="Reeve W.G."/>
            <person name="Richardson P."/>
        </authorList>
    </citation>
    <scope>NUCLEOTIDE SEQUENCE [LARGE SCALE GENOMIC DNA]</scope>
    <source>
        <strain>WSM419</strain>
    </source>
</reference>
<feature type="chain" id="PRO_1000001137" description="Octanoyltransferase">
    <location>
        <begin position="1"/>
        <end position="262"/>
    </location>
</feature>
<feature type="domain" description="BPL/LPL catalytic" evidence="2">
    <location>
        <begin position="60"/>
        <end position="248"/>
    </location>
</feature>
<feature type="active site" description="Acyl-thioester intermediate" evidence="1">
    <location>
        <position position="210"/>
    </location>
</feature>
<feature type="binding site" evidence="1">
    <location>
        <begin position="99"/>
        <end position="106"/>
    </location>
    <ligand>
        <name>substrate</name>
    </ligand>
</feature>
<feature type="binding site" evidence="1">
    <location>
        <begin position="179"/>
        <end position="181"/>
    </location>
    <ligand>
        <name>substrate</name>
    </ligand>
</feature>
<feature type="binding site" evidence="1">
    <location>
        <begin position="192"/>
        <end position="194"/>
    </location>
    <ligand>
        <name>substrate</name>
    </ligand>
</feature>
<feature type="site" description="Lowers pKa of active site Cys" evidence="1">
    <location>
        <position position="176"/>
    </location>
</feature>
<evidence type="ECO:0000255" key="1">
    <source>
        <dbReference type="HAMAP-Rule" id="MF_00013"/>
    </source>
</evidence>
<evidence type="ECO:0000255" key="2">
    <source>
        <dbReference type="PROSITE-ProRule" id="PRU01067"/>
    </source>
</evidence>
<proteinExistence type="inferred from homology"/>
<sequence>MYRPEKNSIRKVTMQREDLIQSMFAPPEAPPVRWRIAPAPVDYQEAVETMEREAADIAAGTADELVWLVEHPPLYTAGTSANAADLVIPDRFPVFATGRGGEYTYHGPGQRVVYVMLDLKRRRQDVRAFVAALESVIIATLDSMNVKGERREDRVGVWVRRPEKPPLMDGTVAEDKIAAIGIRLRRWVSFHGLSLNVDPDLEHFDGIVPCGIRGHGVTSLVDLGLPVMMADVDIRLREAFEMVFGPTRSETNGIGTARLESE</sequence>
<protein>
    <recommendedName>
        <fullName evidence="1">Octanoyltransferase</fullName>
        <ecNumber evidence="1">2.3.1.181</ecNumber>
    </recommendedName>
    <alternativeName>
        <fullName evidence="1">Lipoate-protein ligase B</fullName>
    </alternativeName>
    <alternativeName>
        <fullName evidence="1">Lipoyl/octanoyl transferase</fullName>
    </alternativeName>
    <alternativeName>
        <fullName evidence="1">Octanoyl-[acyl-carrier-protein]-protein N-octanoyltransferase</fullName>
    </alternativeName>
</protein>
<organism>
    <name type="scientific">Sinorhizobium medicae (strain WSM419)</name>
    <name type="common">Ensifer medicae</name>
    <dbReference type="NCBI Taxonomy" id="366394"/>
    <lineage>
        <taxon>Bacteria</taxon>
        <taxon>Pseudomonadati</taxon>
        <taxon>Pseudomonadota</taxon>
        <taxon>Alphaproteobacteria</taxon>
        <taxon>Hyphomicrobiales</taxon>
        <taxon>Rhizobiaceae</taxon>
        <taxon>Sinorhizobium/Ensifer group</taxon>
        <taxon>Sinorhizobium</taxon>
    </lineage>
</organism>
<keyword id="KW-0012">Acyltransferase</keyword>
<keyword id="KW-0963">Cytoplasm</keyword>
<keyword id="KW-0808">Transferase</keyword>
<name>LIPB_SINMW</name>
<accession>A6U899</accession>
<comment type="function">
    <text evidence="1">Catalyzes the transfer of endogenously produced octanoic acid from octanoyl-acyl-carrier-protein onto the lipoyl domains of lipoate-dependent enzymes. Lipoyl-ACP can also act as a substrate although octanoyl-ACP is likely to be the physiological substrate.</text>
</comment>
<comment type="catalytic activity">
    <reaction evidence="1">
        <text>octanoyl-[ACP] + L-lysyl-[protein] = N(6)-octanoyl-L-lysyl-[protein] + holo-[ACP] + H(+)</text>
        <dbReference type="Rhea" id="RHEA:17665"/>
        <dbReference type="Rhea" id="RHEA-COMP:9636"/>
        <dbReference type="Rhea" id="RHEA-COMP:9685"/>
        <dbReference type="Rhea" id="RHEA-COMP:9752"/>
        <dbReference type="Rhea" id="RHEA-COMP:9928"/>
        <dbReference type="ChEBI" id="CHEBI:15378"/>
        <dbReference type="ChEBI" id="CHEBI:29969"/>
        <dbReference type="ChEBI" id="CHEBI:64479"/>
        <dbReference type="ChEBI" id="CHEBI:78463"/>
        <dbReference type="ChEBI" id="CHEBI:78809"/>
        <dbReference type="EC" id="2.3.1.181"/>
    </reaction>
</comment>
<comment type="pathway">
    <text evidence="1">Protein modification; protein lipoylation via endogenous pathway; protein N(6)-(lipoyl)lysine from octanoyl-[acyl-carrier-protein]: step 1/2.</text>
</comment>
<comment type="subcellular location">
    <subcellularLocation>
        <location evidence="1">Cytoplasm</location>
    </subcellularLocation>
</comment>
<comment type="miscellaneous">
    <text evidence="1">In the reaction, the free carboxyl group of octanoic acid is attached via an amide linkage to the epsilon-amino group of a specific lysine residue of lipoyl domains of lipoate-dependent enzymes.</text>
</comment>
<comment type="similarity">
    <text evidence="1">Belongs to the LipB family.</text>
</comment>